<organism>
    <name type="scientific">Saccharomyces cerevisiae (strain YJM789)</name>
    <name type="common">Baker's yeast</name>
    <dbReference type="NCBI Taxonomy" id="307796"/>
    <lineage>
        <taxon>Eukaryota</taxon>
        <taxon>Fungi</taxon>
        <taxon>Dikarya</taxon>
        <taxon>Ascomycota</taxon>
        <taxon>Saccharomycotina</taxon>
        <taxon>Saccharomycetes</taxon>
        <taxon>Saccharomycetales</taxon>
        <taxon>Saccharomycetaceae</taxon>
        <taxon>Saccharomyces</taxon>
    </lineage>
</organism>
<gene>
    <name type="ORF">SCY_0799</name>
</gene>
<name>S2538_YEAS7</name>
<reference key="1">
    <citation type="journal article" date="2007" name="Proc. Natl. Acad. Sci. U.S.A.">
        <title>Genome sequencing and comparative analysis of Saccharomyces cerevisiae strain YJM789.</title>
        <authorList>
            <person name="Wei W."/>
            <person name="McCusker J.H."/>
            <person name="Hyman R.W."/>
            <person name="Jones T."/>
            <person name="Ning Y."/>
            <person name="Cao Z."/>
            <person name="Gu Z."/>
            <person name="Bruno D."/>
            <person name="Miranda M."/>
            <person name="Nguyen M."/>
            <person name="Wilhelmy J."/>
            <person name="Komp C."/>
            <person name="Tamse R."/>
            <person name="Wang X."/>
            <person name="Jia P."/>
            <person name="Luedi P."/>
            <person name="Oefner P.J."/>
            <person name="David L."/>
            <person name="Dietrich F.S."/>
            <person name="Li Y."/>
            <person name="Davis R.W."/>
            <person name="Steinmetz L.M."/>
        </authorList>
    </citation>
    <scope>NUCLEOTIDE SEQUENCE [LARGE SCALE GENOMIC DNA]</scope>
    <source>
        <strain>YJM789</strain>
    </source>
</reference>
<accession>A6ZXL1</accession>
<sequence>MTEQATKPRNSSHLIGGFFGGLTSAVALQPLDLLKTRIQQDKKATLWKNLKEIDSPLQLWRGTLPSALRTSIGSALYLSCLNLMRSSLAKRRNAVPSLTNDSNIVYNKSSSLPRLTMYENLLTGAFARGLVGYITMPITVIKVRYESTLYNYSSLKEAITHIYTKEGLFGFFRGFGATCLRDAPYAGLYVLLYEKSKQLLPMVLPSRFIHYNPEGGFTTYTSTTVNTTSAVLSASLATTVTAPFDTIKTRMQLEPSKFTNSFNTFTSIVKNENVLKLFSGLSMRLARKALSAGIAWGIYEELVKRFM</sequence>
<feature type="chain" id="PRO_0000378948" description="Mitochondrial glycine transporter">
    <location>
        <begin position="1"/>
        <end position="307"/>
    </location>
</feature>
<feature type="transmembrane region" description="Helical; Name=1" evidence="2">
    <location>
        <begin position="14"/>
        <end position="39"/>
    </location>
</feature>
<feature type="transmembrane region" description="Helical; Name=2" evidence="2">
    <location>
        <begin position="62"/>
        <end position="88"/>
    </location>
</feature>
<feature type="transmembrane region" description="Helical; Name=3" evidence="2">
    <location>
        <begin position="121"/>
        <end position="146"/>
    </location>
</feature>
<feature type="transmembrane region" description="Helical; Name=4" evidence="2">
    <location>
        <begin position="174"/>
        <end position="197"/>
    </location>
</feature>
<feature type="transmembrane region" description="Helical; Name=5" evidence="2">
    <location>
        <begin position="225"/>
        <end position="251"/>
    </location>
</feature>
<feature type="transmembrane region" description="Helical; Name=6" evidence="2">
    <location>
        <begin position="280"/>
        <end position="298"/>
    </location>
</feature>
<feature type="repeat" description="Solcar 1" evidence="2">
    <location>
        <begin position="8"/>
        <end position="87"/>
    </location>
</feature>
<feature type="repeat" description="Solcar 2" evidence="2">
    <location>
        <begin position="115"/>
        <end position="199"/>
    </location>
</feature>
<feature type="repeat" description="Solcar 3" evidence="2">
    <location>
        <begin position="221"/>
        <end position="305"/>
    </location>
</feature>
<comment type="function">
    <text evidence="2">Mitochondrial glycine transporter that imports glycine into the mitochondrial matrix. Plays an important role in providing glycine for the first enzymatic step in heme biosynthesis, the condensation of glycine with succinyl-CoA to produce 5-aminolevulinate (ALA) in the mitochondrial matrix.</text>
</comment>
<comment type="catalytic activity">
    <reaction evidence="1">
        <text>glycine(in) = glycine(out)</text>
        <dbReference type="Rhea" id="RHEA:70715"/>
        <dbReference type="ChEBI" id="CHEBI:57305"/>
    </reaction>
</comment>
<comment type="subcellular location">
    <subcellularLocation>
        <location evidence="2">Mitochondrion inner membrane</location>
        <topology evidence="2">Multi-pass membrane protein</topology>
    </subcellularLocation>
</comment>
<comment type="similarity">
    <text evidence="2">Belongs to the mitochondrial carrier (TC 2.A.29) family. SLC25A38 subfamily.</text>
</comment>
<evidence type="ECO:0000250" key="1">
    <source>
        <dbReference type="UniProtKB" id="Q96DW6"/>
    </source>
</evidence>
<evidence type="ECO:0000255" key="2">
    <source>
        <dbReference type="HAMAP-Rule" id="MF_03064"/>
    </source>
</evidence>
<proteinExistence type="inferred from homology"/>
<dbReference type="EMBL" id="AAFW02000145">
    <property type="protein sequence ID" value="EDN60241.1"/>
    <property type="molecule type" value="Genomic_DNA"/>
</dbReference>
<dbReference type="SMR" id="A6ZXL1"/>
<dbReference type="HOGENOM" id="CLU_015166_0_3_1"/>
<dbReference type="Proteomes" id="UP000007060">
    <property type="component" value="Unassembled WGS sequence"/>
</dbReference>
<dbReference type="GO" id="GO:0005743">
    <property type="term" value="C:mitochondrial inner membrane"/>
    <property type="evidence" value="ECO:0007669"/>
    <property type="project" value="UniProtKB-SubCell"/>
</dbReference>
<dbReference type="GO" id="GO:0015187">
    <property type="term" value="F:glycine transmembrane transporter activity"/>
    <property type="evidence" value="ECO:0007669"/>
    <property type="project" value="UniProtKB-UniRule"/>
</dbReference>
<dbReference type="GO" id="GO:1904983">
    <property type="term" value="P:glycine import into mitochondrion"/>
    <property type="evidence" value="ECO:0007669"/>
    <property type="project" value="UniProtKB-UniRule"/>
</dbReference>
<dbReference type="FunFam" id="1.50.40.10:FF:000103">
    <property type="entry name" value="Mitochondrial glycine transporter"/>
    <property type="match status" value="1"/>
</dbReference>
<dbReference type="Gene3D" id="1.50.40.10">
    <property type="entry name" value="Mitochondrial carrier domain"/>
    <property type="match status" value="1"/>
</dbReference>
<dbReference type="HAMAP" id="MF_03064">
    <property type="entry name" value="SLC25A38"/>
    <property type="match status" value="1"/>
</dbReference>
<dbReference type="InterPro" id="IPR030847">
    <property type="entry name" value="Hem25/SLC25A38"/>
</dbReference>
<dbReference type="InterPro" id="IPR002067">
    <property type="entry name" value="Mit_carrier"/>
</dbReference>
<dbReference type="InterPro" id="IPR018108">
    <property type="entry name" value="Mitochondrial_sb/sol_carrier"/>
</dbReference>
<dbReference type="InterPro" id="IPR023395">
    <property type="entry name" value="Mt_carrier_dom_sf"/>
</dbReference>
<dbReference type="PANTHER" id="PTHR46181">
    <property type="entry name" value="MITOCHONDRIAL GLYCINE TRANSPORTER"/>
    <property type="match status" value="1"/>
</dbReference>
<dbReference type="PANTHER" id="PTHR46181:SF3">
    <property type="entry name" value="MITOCHONDRIAL GLYCINE TRANSPORTER"/>
    <property type="match status" value="1"/>
</dbReference>
<dbReference type="Pfam" id="PF00153">
    <property type="entry name" value="Mito_carr"/>
    <property type="match status" value="3"/>
</dbReference>
<dbReference type="PRINTS" id="PR00926">
    <property type="entry name" value="MITOCARRIER"/>
</dbReference>
<dbReference type="SUPFAM" id="SSF103506">
    <property type="entry name" value="Mitochondrial carrier"/>
    <property type="match status" value="1"/>
</dbReference>
<dbReference type="PROSITE" id="PS50920">
    <property type="entry name" value="SOLCAR"/>
    <property type="match status" value="3"/>
</dbReference>
<protein>
    <recommendedName>
        <fullName evidence="2">Mitochondrial glycine transporter</fullName>
    </recommendedName>
    <alternativeName>
        <fullName evidence="2">Solute carrier family 25 member 38 homolog</fullName>
    </alternativeName>
</protein>
<keyword id="KW-0472">Membrane</keyword>
<keyword id="KW-0496">Mitochondrion</keyword>
<keyword id="KW-0999">Mitochondrion inner membrane</keyword>
<keyword id="KW-0677">Repeat</keyword>
<keyword id="KW-0812">Transmembrane</keyword>
<keyword id="KW-1133">Transmembrane helix</keyword>
<keyword id="KW-0813">Transport</keyword>